<reference key="1">
    <citation type="journal article" date="1990" name="Virology">
        <title>Genome organization and taxonomic position of human papillomavirus type 47 inferred from its DNA sequence.</title>
        <authorList>
            <person name="Kiyono T."/>
            <person name="Adachi A."/>
            <person name="Ishibashi M."/>
        </authorList>
    </citation>
    <scope>NUCLEOTIDE SEQUENCE [GENOMIC DNA]</scope>
</reference>
<name>VE1_HPV47</name>
<protein>
    <recommendedName>
        <fullName evidence="1">Replication protein E1</fullName>
        <ecNumber evidence="1">5.6.2.4</ecNumber>
    </recommendedName>
    <alternativeName>
        <fullName evidence="1">ATP-dependent helicase E1</fullName>
    </alternativeName>
    <alternativeName>
        <fullName evidence="1">DNA 3'-5' helicase E1</fullName>
    </alternativeName>
</protein>
<comment type="function">
    <text evidence="1">ATP-dependent DNA 3'-5' helicase required for initiation of viral DNA replication. It forms a complex with the viral E2 protein. The E1-E2 complex binds to the replication origin which contains binding sites for both proteins. During the initial step, a dimer of E1 interacts with a dimer of protein E2 leading to a complex that binds the viral origin of replication with high specificity. Then, a second dimer of E1 displaces the E2 dimer in an ATP-dependent manner to form the E1 tetramer. Following this, two E1 monomers are added to each half of the site, which results in the formation of two E1 trimers on the viral ori. Subsequently, two hexamers will be created. The double hexamer acts as a bi-directional helicase machinery and unwinds the viral DNA and then recruits the host DNA polymerase to start replication.</text>
</comment>
<comment type="catalytic activity">
    <reaction evidence="1">
        <text>Couples ATP hydrolysis with the unwinding of duplex DNA by translocating in the 3'-5' direction.</text>
        <dbReference type="EC" id="5.6.2.4"/>
    </reaction>
</comment>
<comment type="catalytic activity">
    <reaction evidence="1">
        <text>ATP + H2O = ADP + phosphate + H(+)</text>
        <dbReference type="Rhea" id="RHEA:13065"/>
        <dbReference type="ChEBI" id="CHEBI:15377"/>
        <dbReference type="ChEBI" id="CHEBI:15378"/>
        <dbReference type="ChEBI" id="CHEBI:30616"/>
        <dbReference type="ChEBI" id="CHEBI:43474"/>
        <dbReference type="ChEBI" id="CHEBI:456216"/>
        <dbReference type="EC" id="5.6.2.4"/>
    </reaction>
</comment>
<comment type="subunit">
    <text evidence="1">Can form hexamers. Interacts with E2 protein; this interaction increases E1 DNA binding specificity. Interacts with host DNA polymerase subunit POLA2. Interacts with host single stranded DNA-binding protein RPA1. Interacts with host TOP1; this interaction stimulates the enzymatic activity of TOP1.</text>
</comment>
<comment type="subcellular location">
    <subcellularLocation>
        <location evidence="1">Host nucleus</location>
    </subcellularLocation>
</comment>
<comment type="PTM">
    <text evidence="1">Phosphorylated.</text>
</comment>
<comment type="PTM">
    <text evidence="1">Sumoylated.</text>
</comment>
<comment type="similarity">
    <text evidence="1">Belongs to the papillomaviridae E1 protein family.</text>
</comment>
<organism>
    <name type="scientific">Human papillomavirus 47</name>
    <dbReference type="NCBI Taxonomy" id="10594"/>
    <lineage>
        <taxon>Viruses</taxon>
        <taxon>Monodnaviria</taxon>
        <taxon>Shotokuvirae</taxon>
        <taxon>Cossaviricota</taxon>
        <taxon>Papovaviricetes</taxon>
        <taxon>Zurhausenvirales</taxon>
        <taxon>Papillomaviridae</taxon>
        <taxon>Firstpapillomavirinae</taxon>
        <taxon>Betapapillomavirus</taxon>
        <taxon>Betapapillomavirus 1</taxon>
    </lineage>
</organism>
<proteinExistence type="inferred from homology"/>
<gene>
    <name evidence="1" type="primary">E1</name>
</gene>
<accession>P22419</accession>
<organismHost>
    <name type="scientific">Homo sapiens</name>
    <name type="common">Human</name>
    <dbReference type="NCBI Taxonomy" id="9606"/>
</organismHost>
<evidence type="ECO:0000255" key="1">
    <source>
        <dbReference type="HAMAP-Rule" id="MF_04000"/>
    </source>
</evidence>
<keyword id="KW-0067">ATP-binding</keyword>
<keyword id="KW-0235">DNA replication</keyword>
<keyword id="KW-0238">DNA-binding</keyword>
<keyword id="KW-0244">Early protein</keyword>
<keyword id="KW-0347">Helicase</keyword>
<keyword id="KW-1048">Host nucleus</keyword>
<keyword id="KW-0378">Hydrolase</keyword>
<keyword id="KW-0413">Isomerase</keyword>
<keyword id="KW-1017">Isopeptide bond</keyword>
<keyword id="KW-0547">Nucleotide-binding</keyword>
<keyword id="KW-0597">Phosphoprotein</keyword>
<keyword id="KW-0832">Ubl conjugation</keyword>
<dbReference type="EC" id="5.6.2.4" evidence="1"/>
<dbReference type="EMBL" id="M32305">
    <property type="protein sequence ID" value="AAA46978.1"/>
    <property type="molecule type" value="Genomic_DNA"/>
</dbReference>
<dbReference type="PIR" id="C35324">
    <property type="entry name" value="W1WL47"/>
</dbReference>
<dbReference type="SMR" id="P22419"/>
<dbReference type="Proteomes" id="UP000008697">
    <property type="component" value="Genome"/>
</dbReference>
<dbReference type="GO" id="GO:0042025">
    <property type="term" value="C:host cell nucleus"/>
    <property type="evidence" value="ECO:0007669"/>
    <property type="project" value="UniProtKB-SubCell"/>
</dbReference>
<dbReference type="GO" id="GO:0005524">
    <property type="term" value="F:ATP binding"/>
    <property type="evidence" value="ECO:0007669"/>
    <property type="project" value="UniProtKB-UniRule"/>
</dbReference>
<dbReference type="GO" id="GO:0016887">
    <property type="term" value="F:ATP hydrolysis activity"/>
    <property type="evidence" value="ECO:0007669"/>
    <property type="project" value="RHEA"/>
</dbReference>
<dbReference type="GO" id="GO:0003677">
    <property type="term" value="F:DNA binding"/>
    <property type="evidence" value="ECO:0007669"/>
    <property type="project" value="UniProtKB-UniRule"/>
</dbReference>
<dbReference type="GO" id="GO:0003678">
    <property type="term" value="F:DNA helicase activity"/>
    <property type="evidence" value="ECO:0007669"/>
    <property type="project" value="UniProtKB-UniRule"/>
</dbReference>
<dbReference type="GO" id="GO:0006260">
    <property type="term" value="P:DNA replication"/>
    <property type="evidence" value="ECO:0007669"/>
    <property type="project" value="UniProtKB-UniRule"/>
</dbReference>
<dbReference type="Gene3D" id="3.40.1310.10">
    <property type="match status" value="1"/>
</dbReference>
<dbReference type="Gene3D" id="3.40.50.300">
    <property type="entry name" value="P-loop containing nucleotide triphosphate hydrolases"/>
    <property type="match status" value="1"/>
</dbReference>
<dbReference type="Gene3D" id="1.10.10.510">
    <property type="entry name" value="Zinc finger, large T-antigen D1 domain"/>
    <property type="match status" value="1"/>
</dbReference>
<dbReference type="HAMAP" id="MF_04000">
    <property type="entry name" value="PPV_E1"/>
    <property type="match status" value="1"/>
</dbReference>
<dbReference type="InterPro" id="IPR014015">
    <property type="entry name" value="Helicase_SF3_DNA-vir"/>
</dbReference>
<dbReference type="InterPro" id="IPR027417">
    <property type="entry name" value="P-loop_NTPase"/>
</dbReference>
<dbReference type="InterPro" id="IPR001177">
    <property type="entry name" value="PPV_DNA_helicase_E1_C"/>
</dbReference>
<dbReference type="InterPro" id="IPR014000">
    <property type="entry name" value="PPV_DNA_helicase_E1_N"/>
</dbReference>
<dbReference type="InterPro" id="IPR046832">
    <property type="entry name" value="PPV_E1_DBD"/>
</dbReference>
<dbReference type="InterPro" id="IPR046935">
    <property type="entry name" value="PPV_E1_DBD_sf"/>
</dbReference>
<dbReference type="InterPro" id="IPR016393">
    <property type="entry name" value="Rep_E1_papillomaV"/>
</dbReference>
<dbReference type="InterPro" id="IPR037102">
    <property type="entry name" value="Znf_lg_T-Ag_D1_dom_sf"/>
</dbReference>
<dbReference type="Pfam" id="PF00519">
    <property type="entry name" value="PPV_E1_C"/>
    <property type="match status" value="1"/>
</dbReference>
<dbReference type="Pfam" id="PF20450">
    <property type="entry name" value="PPV_E1_DBD"/>
    <property type="match status" value="1"/>
</dbReference>
<dbReference type="Pfam" id="PF00524">
    <property type="entry name" value="PPV_E1_N"/>
    <property type="match status" value="1"/>
</dbReference>
<dbReference type="PIRSF" id="PIRSF003383">
    <property type="entry name" value="Rep_E1_papillomaV"/>
    <property type="match status" value="1"/>
</dbReference>
<dbReference type="SUPFAM" id="SSF55464">
    <property type="entry name" value="Origin of replication-binding domain, RBD-like"/>
    <property type="match status" value="1"/>
</dbReference>
<dbReference type="SUPFAM" id="SSF52540">
    <property type="entry name" value="P-loop containing nucleoside triphosphate hydrolases"/>
    <property type="match status" value="1"/>
</dbReference>
<dbReference type="PROSITE" id="PS51206">
    <property type="entry name" value="SF3_HELICASE_1"/>
    <property type="match status" value="1"/>
</dbReference>
<feature type="chain" id="PRO_0000133143" description="Replication protein E1">
    <location>
        <begin position="1"/>
        <end position="605"/>
    </location>
</feature>
<feature type="domain" description="SF3 helicase" evidence="1">
    <location>
        <begin position="407"/>
        <end position="557"/>
    </location>
</feature>
<feature type="region of interest" description="DNA-binding region" evidence="1">
    <location>
        <begin position="145"/>
        <end position="308"/>
    </location>
</feature>
<feature type="short sequence motif" description="Nuclear localization signal" evidence="1">
    <location>
        <begin position="76"/>
        <end position="78"/>
    </location>
</feature>
<feature type="short sequence motif" description="Nuclear export signal" evidence="1">
    <location>
        <begin position="88"/>
        <end position="97"/>
    </location>
</feature>
<feature type="binding site" evidence="1">
    <location>
        <begin position="433"/>
        <end position="440"/>
    </location>
    <ligand>
        <name>ATP</name>
        <dbReference type="ChEBI" id="CHEBI:30616"/>
    </ligand>
</feature>
<feature type="modified residue" description="Phosphoserine; by host" evidence="1">
    <location>
        <position position="81"/>
    </location>
</feature>
<feature type="modified residue" description="Phosphoserine; by host" evidence="1">
    <location>
        <position position="89"/>
    </location>
</feature>
<feature type="cross-link" description="Glycyl lysine isopeptide (Lys-Gly) (interchain with G-Cter in SUMO)" evidence="1">
    <location>
        <position position="514"/>
    </location>
</feature>
<sequence length="605" mass="69185">MADSKGSTSKEGFGDWCILEADCSDVEDDLGQLFERDTDSDISDLLDNCDLDQGNSRELFHQQECKQSEEQLQKLKRKYLSPKAVAQLSPRLESISLSPQQKSKRRLFAEQDSGLELTFNNEAEDVTPEVEVPAIDSRPDDDEGGSGDVDIHYTALLRSSNQKATLLAKFKQAFGVGFNELTRQFKSYKTCCNHWVVSVYAVHDDLFESSKQLLQQHCDYIWVRGIDAMSLYLLCFKAGKNRGTVHKLITTMLNVHEQQILSEPPKLRNTAAALFWYKGCMGPGVFTHGPYPEWIAQLTILGHKSAEASAFDLSVMVQWAFDNNLFEEADIAYGYARLAPEDSNAVAWLAHNNQAKYVRECAMMVRYYKKGQMRDMSMSEWIYTRIHEVEGEGQWSSIVKFLRYQEINFISFLAALKDLLHSVPKRNCILFHGPPNTGKSSFGMSLIKVLRGRVLSFVNSKSQFWLQPLGECKIALLDDVTDPCWVYMDQYLRNGLDGHFVSLDCKYRAPMQTKFPPLILTSNINVHAETNYRYLHSRIKGFEFKNPFPMKADNTPQFELTDQSWKSFFTRLWTHLDLSDQEDEGEHGESQRAFQCSARTANEHL</sequence>